<proteinExistence type="evidence at protein level"/>
<evidence type="ECO:0000250" key="1"/>
<evidence type="ECO:0000250" key="2">
    <source>
        <dbReference type="UniProtKB" id="P16283"/>
    </source>
</evidence>
<evidence type="ECO:0000250" key="3">
    <source>
        <dbReference type="UniProtKB" id="P23348"/>
    </source>
</evidence>
<evidence type="ECO:0000255" key="4"/>
<evidence type="ECO:0000256" key="5">
    <source>
        <dbReference type="SAM" id="MobiDB-lite"/>
    </source>
</evidence>
<evidence type="ECO:0000269" key="6">
    <source>
    </source>
</evidence>
<evidence type="ECO:0000269" key="7">
    <source>
    </source>
</evidence>
<evidence type="ECO:0000269" key="8">
    <source>
    </source>
</evidence>
<evidence type="ECO:0000269" key="9">
    <source>
    </source>
</evidence>
<evidence type="ECO:0000269" key="10">
    <source>
    </source>
</evidence>
<evidence type="ECO:0000269" key="11">
    <source ref="3"/>
</evidence>
<evidence type="ECO:0000269" key="12">
    <source ref="6"/>
</evidence>
<evidence type="ECO:0000303" key="13">
    <source ref="2"/>
</evidence>
<evidence type="ECO:0000303" key="14">
    <source ref="3"/>
</evidence>
<evidence type="ECO:0000305" key="15"/>
<evidence type="ECO:0000305" key="16">
    <source>
    </source>
</evidence>
<evidence type="ECO:0007829" key="17">
    <source>
        <dbReference type="PDB" id="8Y85"/>
    </source>
</evidence>
<evidence type="ECO:0007829" key="18">
    <source>
        <dbReference type="PDB" id="8Y8K"/>
    </source>
</evidence>
<evidence type="ECO:0007829" key="19">
    <source>
        <dbReference type="PDB" id="8ZLE"/>
    </source>
</evidence>
<dbReference type="EMBL" id="U05596">
    <property type="protein sequence ID" value="AAA50748.1"/>
    <property type="molecule type" value="mRNA"/>
</dbReference>
<dbReference type="EMBL" id="L27213">
    <property type="protein sequence ID" value="AAB05850.1"/>
    <property type="molecule type" value="mRNA"/>
</dbReference>
<dbReference type="EMBL" id="AY142112">
    <property type="protein sequence ID" value="AAN34939.1"/>
    <property type="molecule type" value="mRNA"/>
</dbReference>
<dbReference type="EMBL" id="AK289974">
    <property type="protein sequence ID" value="BAF82663.1"/>
    <property type="molecule type" value="mRNA"/>
</dbReference>
<dbReference type="EMBL" id="AC009955">
    <property type="status" value="NOT_ANNOTATED_CDS"/>
    <property type="molecule type" value="Genomic_DNA"/>
</dbReference>
<dbReference type="EMBL" id="CH471063">
    <property type="protein sequence ID" value="EAW70778.1"/>
    <property type="molecule type" value="Genomic_DNA"/>
</dbReference>
<dbReference type="EMBL" id="BC136384">
    <property type="protein sequence ID" value="AAI36385.1"/>
    <property type="molecule type" value="mRNA"/>
</dbReference>
<dbReference type="EMBL" id="BC146656">
    <property type="protein sequence ID" value="AAI46657.1"/>
    <property type="molecule type" value="mRNA"/>
</dbReference>
<dbReference type="EMBL" id="BC171760">
    <property type="protein sequence ID" value="AAI71760.1"/>
    <property type="molecule type" value="mRNA"/>
</dbReference>
<dbReference type="CCDS" id="CCDS2445.1">
    <molecule id="P48751-1"/>
</dbReference>
<dbReference type="CCDS" id="CCDS2446.1">
    <molecule id="P48751-3"/>
</dbReference>
<dbReference type="PIR" id="I38496">
    <property type="entry name" value="I38496"/>
</dbReference>
<dbReference type="RefSeq" id="NP_001313488.2">
    <molecule id="P48751-3"/>
    <property type="nucleotide sequence ID" value="NM_001326559.2"/>
</dbReference>
<dbReference type="RefSeq" id="NP_005061.3">
    <molecule id="P48751-1"/>
    <property type="nucleotide sequence ID" value="NM_005070.4"/>
</dbReference>
<dbReference type="RefSeq" id="NP_963868.3">
    <molecule id="P48751-3"/>
    <property type="nucleotide sequence ID" value="NM_201574.3"/>
</dbReference>
<dbReference type="RefSeq" id="XP_005246846.1">
    <property type="nucleotide sequence ID" value="XM_005246789.4"/>
</dbReference>
<dbReference type="RefSeq" id="XP_047301511.1">
    <molecule id="P48751-1"/>
    <property type="nucleotide sequence ID" value="XM_047445555.1"/>
</dbReference>
<dbReference type="PDB" id="8Y85">
    <property type="method" value="EM"/>
    <property type="resolution" value="2.73 A"/>
    <property type="chains" value="A/B=1-1232"/>
</dbReference>
<dbReference type="PDB" id="8Y86">
    <property type="method" value="EM"/>
    <property type="resolution" value="2.75 A"/>
    <property type="chains" value="A/B=1-1232"/>
</dbReference>
<dbReference type="PDB" id="8Y8K">
    <property type="method" value="EM"/>
    <property type="resolution" value="2.89 A"/>
    <property type="chains" value="A/B=1-1232"/>
</dbReference>
<dbReference type="PDB" id="8ZLE">
    <property type="method" value="EM"/>
    <property type="resolution" value="3.35 A"/>
    <property type="chains" value="A/B=1-675"/>
</dbReference>
<dbReference type="PDBsum" id="8Y85"/>
<dbReference type="PDBsum" id="8Y86"/>
<dbReference type="PDBsum" id="8Y8K"/>
<dbReference type="PDBsum" id="8ZLE"/>
<dbReference type="EMDB" id="EMD-39034"/>
<dbReference type="EMDB" id="EMD-39035"/>
<dbReference type="EMDB" id="EMD-39050"/>
<dbReference type="SMR" id="P48751"/>
<dbReference type="BioGRID" id="112399">
    <property type="interactions" value="7"/>
</dbReference>
<dbReference type="FunCoup" id="P48751">
    <property type="interactions" value="426"/>
</dbReference>
<dbReference type="IntAct" id="P48751">
    <property type="interactions" value="4"/>
</dbReference>
<dbReference type="MINT" id="P48751"/>
<dbReference type="STRING" id="9606.ENSP00000273063"/>
<dbReference type="TCDB" id="2.A.31.1.3">
    <property type="family name" value="the anion exchanger (ae) family"/>
</dbReference>
<dbReference type="GlyGen" id="P48751">
    <property type="glycosylation" value="2 sites"/>
</dbReference>
<dbReference type="iPTMnet" id="P48751"/>
<dbReference type="PhosphoSitePlus" id="P48751"/>
<dbReference type="SwissPalm" id="P48751"/>
<dbReference type="BioMuta" id="SLC4A3"/>
<dbReference type="DMDM" id="308153414"/>
<dbReference type="jPOST" id="P48751"/>
<dbReference type="MassIVE" id="P48751"/>
<dbReference type="PaxDb" id="9606-ENSP00000273063"/>
<dbReference type="PeptideAtlas" id="P48751"/>
<dbReference type="ProteomicsDB" id="55943">
    <molecule id="P48751-1"/>
</dbReference>
<dbReference type="ProteomicsDB" id="55944">
    <molecule id="P48751-2"/>
</dbReference>
<dbReference type="ProteomicsDB" id="55945">
    <molecule id="P48751-3"/>
</dbReference>
<dbReference type="Antibodypedia" id="52538">
    <property type="antibodies" value="35 antibodies from 15 providers"/>
</dbReference>
<dbReference type="DNASU" id="6508"/>
<dbReference type="Ensembl" id="ENST00000273063.10">
    <molecule id="P48751-3"/>
    <property type="protein sequence ID" value="ENSP00000273063.6"/>
    <property type="gene ID" value="ENSG00000114923.17"/>
</dbReference>
<dbReference type="Ensembl" id="ENST00000317151.7">
    <molecule id="P48751-1"/>
    <property type="protein sequence ID" value="ENSP00000314006.3"/>
    <property type="gene ID" value="ENSG00000114923.17"/>
</dbReference>
<dbReference type="Ensembl" id="ENST00000358055.8">
    <molecule id="P48751-1"/>
    <property type="protein sequence ID" value="ENSP00000350756.3"/>
    <property type="gene ID" value="ENSG00000114923.17"/>
</dbReference>
<dbReference type="Ensembl" id="ENST00000373760.6">
    <molecule id="P48751-1"/>
    <property type="protein sequence ID" value="ENSP00000362865.2"/>
    <property type="gene ID" value="ENSG00000114923.17"/>
</dbReference>
<dbReference type="GeneID" id="6508"/>
<dbReference type="KEGG" id="hsa:6508"/>
<dbReference type="MANE-Select" id="ENST00000358055.8">
    <property type="protein sequence ID" value="ENSP00000350756.3"/>
    <property type="RefSeq nucleotide sequence ID" value="NM_005070.4"/>
    <property type="RefSeq protein sequence ID" value="NP_005061.3"/>
</dbReference>
<dbReference type="UCSC" id="uc002vmo.5">
    <molecule id="P48751-1"/>
    <property type="organism name" value="human"/>
</dbReference>
<dbReference type="AGR" id="HGNC:11029"/>
<dbReference type="CTD" id="6508"/>
<dbReference type="DisGeNET" id="6508"/>
<dbReference type="GeneCards" id="SLC4A3"/>
<dbReference type="HGNC" id="HGNC:11029">
    <property type="gene designation" value="SLC4A3"/>
</dbReference>
<dbReference type="HPA" id="ENSG00000114923">
    <property type="expression patterns" value="Tissue enhanced (heart muscle, ovary)"/>
</dbReference>
<dbReference type="MalaCards" id="SLC4A3"/>
<dbReference type="MIM" id="106195">
    <property type="type" value="gene"/>
</dbReference>
<dbReference type="MIM" id="620231">
    <property type="type" value="phenotype"/>
</dbReference>
<dbReference type="neXtProt" id="NX_P48751"/>
<dbReference type="OpenTargets" id="ENSG00000114923"/>
<dbReference type="Orphanet" id="51083">
    <property type="disease" value="Familial short QT syndrome"/>
</dbReference>
<dbReference type="PharmGKB" id="PA35897"/>
<dbReference type="VEuPathDB" id="HostDB:ENSG00000114923"/>
<dbReference type="eggNOG" id="KOG1172">
    <property type="taxonomic scope" value="Eukaryota"/>
</dbReference>
<dbReference type="GeneTree" id="ENSGT00940000159765"/>
<dbReference type="HOGENOM" id="CLU_002289_1_0_1"/>
<dbReference type="InParanoid" id="P48751"/>
<dbReference type="OMA" id="CLMNVGC"/>
<dbReference type="OrthoDB" id="1735926at2759"/>
<dbReference type="PAN-GO" id="P48751">
    <property type="GO annotations" value="5 GO annotations based on evolutionary models"/>
</dbReference>
<dbReference type="PhylomeDB" id="P48751"/>
<dbReference type="TreeFam" id="TF313630"/>
<dbReference type="PathwayCommons" id="P48751"/>
<dbReference type="Reactome" id="R-HSA-425381">
    <property type="pathway name" value="Bicarbonate transporters"/>
</dbReference>
<dbReference type="SignaLink" id="P48751"/>
<dbReference type="SIGNOR" id="P48751"/>
<dbReference type="BioGRID-ORCS" id="6508">
    <property type="hits" value="10 hits in 1146 CRISPR screens"/>
</dbReference>
<dbReference type="ChiTaRS" id="SLC4A3">
    <property type="organism name" value="human"/>
</dbReference>
<dbReference type="GeneWiki" id="SLC4A3"/>
<dbReference type="GenomeRNAi" id="6508"/>
<dbReference type="Pharos" id="P48751">
    <property type="development level" value="Tbio"/>
</dbReference>
<dbReference type="PRO" id="PR:P48751"/>
<dbReference type="Proteomes" id="UP000005640">
    <property type="component" value="Chromosome 2"/>
</dbReference>
<dbReference type="RNAct" id="P48751">
    <property type="molecule type" value="protein"/>
</dbReference>
<dbReference type="Bgee" id="ENSG00000114923">
    <property type="expression patterns" value="Expressed in apex of heart and 134 other cell types or tissues"/>
</dbReference>
<dbReference type="ExpressionAtlas" id="P48751">
    <property type="expression patterns" value="baseline and differential"/>
</dbReference>
<dbReference type="GO" id="GO:0009897">
    <property type="term" value="C:external side of plasma membrane"/>
    <property type="evidence" value="ECO:0000315"/>
    <property type="project" value="ARUK-UCL"/>
</dbReference>
<dbReference type="GO" id="GO:0016020">
    <property type="term" value="C:membrane"/>
    <property type="evidence" value="ECO:0000304"/>
    <property type="project" value="ProtInc"/>
</dbReference>
<dbReference type="GO" id="GO:0005886">
    <property type="term" value="C:plasma membrane"/>
    <property type="evidence" value="ECO:0000314"/>
    <property type="project" value="UniProtKB"/>
</dbReference>
<dbReference type="GO" id="GO:0015106">
    <property type="term" value="F:bicarbonate transmembrane transporter activity"/>
    <property type="evidence" value="ECO:0000315"/>
    <property type="project" value="ARUK-UCL"/>
</dbReference>
<dbReference type="GO" id="GO:0140900">
    <property type="term" value="F:chloride:bicarbonate antiporter activity"/>
    <property type="evidence" value="ECO:0000314"/>
    <property type="project" value="UniProtKB"/>
</dbReference>
<dbReference type="GO" id="GO:0005452">
    <property type="term" value="F:solute:inorganic anion antiporter activity"/>
    <property type="evidence" value="ECO:0000304"/>
    <property type="project" value="Reactome"/>
</dbReference>
<dbReference type="GO" id="GO:0015701">
    <property type="term" value="P:bicarbonate transport"/>
    <property type="evidence" value="ECO:0000315"/>
    <property type="project" value="ARUK-UCL"/>
</dbReference>
<dbReference type="GO" id="GO:0061337">
    <property type="term" value="P:cardiac conduction"/>
    <property type="evidence" value="ECO:0000315"/>
    <property type="project" value="ARUK-UCL"/>
</dbReference>
<dbReference type="GO" id="GO:0086001">
    <property type="term" value="P:cardiac muscle cell action potential"/>
    <property type="evidence" value="ECO:0000250"/>
    <property type="project" value="ARUK-UCL"/>
</dbReference>
<dbReference type="GO" id="GO:0045851">
    <property type="term" value="P:pH reduction"/>
    <property type="evidence" value="ECO:0000315"/>
    <property type="project" value="UniProtKB"/>
</dbReference>
<dbReference type="GO" id="GO:0098901">
    <property type="term" value="P:regulation of cardiac muscle cell action potential"/>
    <property type="evidence" value="ECO:0000315"/>
    <property type="project" value="UniProtKB"/>
</dbReference>
<dbReference type="GO" id="GO:0051453">
    <property type="term" value="P:regulation of intracellular pH"/>
    <property type="evidence" value="ECO:0000318"/>
    <property type="project" value="GO_Central"/>
</dbReference>
<dbReference type="GO" id="GO:0055085">
    <property type="term" value="P:transmembrane transport"/>
    <property type="evidence" value="ECO:0000318"/>
    <property type="project" value="GO_Central"/>
</dbReference>
<dbReference type="GO" id="GO:0150104">
    <property type="term" value="P:transport across blood-brain barrier"/>
    <property type="evidence" value="ECO:0000303"/>
    <property type="project" value="ARUK-UCL"/>
</dbReference>
<dbReference type="FunFam" id="1.10.287.570:FF:000001">
    <property type="entry name" value="Anion exchange protein"/>
    <property type="match status" value="1"/>
</dbReference>
<dbReference type="FunFam" id="3.40.930.10:FF:000004">
    <property type="entry name" value="Anion exchange protein"/>
    <property type="match status" value="1"/>
</dbReference>
<dbReference type="Gene3D" id="1.10.287.570">
    <property type="entry name" value="Helical hairpin bin"/>
    <property type="match status" value="1"/>
</dbReference>
<dbReference type="Gene3D" id="3.40.930.10">
    <property type="entry name" value="Mannitol-specific EII, Chain A"/>
    <property type="match status" value="1"/>
</dbReference>
<dbReference type="InterPro" id="IPR001717">
    <property type="entry name" value="Anion_exchange"/>
</dbReference>
<dbReference type="InterPro" id="IPR002979">
    <property type="entry name" value="Anion_exchange_3"/>
</dbReference>
<dbReference type="InterPro" id="IPR018241">
    <property type="entry name" value="Anion_exchange_CS"/>
</dbReference>
<dbReference type="InterPro" id="IPR013769">
    <property type="entry name" value="Band3_cytoplasmic_dom"/>
</dbReference>
<dbReference type="InterPro" id="IPR011531">
    <property type="entry name" value="HCO3_transpt-like_TM_dom"/>
</dbReference>
<dbReference type="InterPro" id="IPR003020">
    <property type="entry name" value="HCO3_transpt_euk"/>
</dbReference>
<dbReference type="InterPro" id="IPR016152">
    <property type="entry name" value="PTrfase/Anion_transptr"/>
</dbReference>
<dbReference type="NCBIfam" id="TIGR00834">
    <property type="entry name" value="ae"/>
    <property type="match status" value="1"/>
</dbReference>
<dbReference type="PANTHER" id="PTHR11453">
    <property type="entry name" value="ANION EXCHANGE PROTEIN"/>
    <property type="match status" value="1"/>
</dbReference>
<dbReference type="PANTHER" id="PTHR11453:SF15">
    <property type="entry name" value="ANION EXCHANGE PROTEIN 3"/>
    <property type="match status" value="1"/>
</dbReference>
<dbReference type="Pfam" id="PF07565">
    <property type="entry name" value="Band_3_cyto"/>
    <property type="match status" value="1"/>
</dbReference>
<dbReference type="Pfam" id="PF00955">
    <property type="entry name" value="HCO3_cotransp"/>
    <property type="match status" value="2"/>
</dbReference>
<dbReference type="PRINTS" id="PR00165">
    <property type="entry name" value="ANIONEXCHNGR"/>
</dbReference>
<dbReference type="PRINTS" id="PR01189">
    <property type="entry name" value="ANIONEXHNGR3"/>
</dbReference>
<dbReference type="PRINTS" id="PR01231">
    <property type="entry name" value="HCO3TRNSPORT"/>
</dbReference>
<dbReference type="SUPFAM" id="SSF55804">
    <property type="entry name" value="Phoshotransferase/anion transport protein"/>
    <property type="match status" value="1"/>
</dbReference>
<dbReference type="PROSITE" id="PS00219">
    <property type="entry name" value="ANION_EXCHANGER_1"/>
    <property type="match status" value="1"/>
</dbReference>
<dbReference type="PROSITE" id="PS00220">
    <property type="entry name" value="ANION_EXCHANGER_2"/>
    <property type="match status" value="1"/>
</dbReference>
<organism>
    <name type="scientific">Homo sapiens</name>
    <name type="common">Human</name>
    <dbReference type="NCBI Taxonomy" id="9606"/>
    <lineage>
        <taxon>Eukaryota</taxon>
        <taxon>Metazoa</taxon>
        <taxon>Chordata</taxon>
        <taxon>Craniata</taxon>
        <taxon>Vertebrata</taxon>
        <taxon>Euteleostomi</taxon>
        <taxon>Mammalia</taxon>
        <taxon>Eutheria</taxon>
        <taxon>Euarchontoglires</taxon>
        <taxon>Primates</taxon>
        <taxon>Haplorrhini</taxon>
        <taxon>Catarrhini</taxon>
        <taxon>Hominidae</taxon>
        <taxon>Homo</taxon>
    </lineage>
</organism>
<keyword id="KW-0002">3D-structure</keyword>
<keyword id="KW-0025">Alternative splicing</keyword>
<keyword id="KW-0039">Anion exchange</keyword>
<keyword id="KW-0050">Antiport</keyword>
<keyword id="KW-1003">Cell membrane</keyword>
<keyword id="KW-0225">Disease variant</keyword>
<keyword id="KW-0406">Ion transport</keyword>
<keyword id="KW-0449">Lipoprotein</keyword>
<keyword id="KW-0472">Membrane</keyword>
<keyword id="KW-0488">Methylation</keyword>
<keyword id="KW-0564">Palmitate</keyword>
<keyword id="KW-0597">Phosphoprotein</keyword>
<keyword id="KW-1267">Proteomics identification</keyword>
<keyword id="KW-1185">Reference proteome</keyword>
<keyword id="KW-0940">Short QT syndrome</keyword>
<keyword id="KW-0812">Transmembrane</keyword>
<keyword id="KW-1133">Transmembrane helix</keyword>
<keyword id="KW-0813">Transport</keyword>
<protein>
    <recommendedName>
        <fullName>Anion exchange protein 3</fullName>
        <shortName>AE 3</shortName>
        <shortName>Anion exchanger 3</shortName>
    </recommendedName>
    <alternativeName>
        <fullName>CAE3/BAE3</fullName>
    </alternativeName>
    <alternativeName>
        <fullName>Cardiac/brain band 3-like protein</fullName>
    </alternativeName>
    <alternativeName>
        <fullName>Neuronal band 3-like protein</fullName>
    </alternativeName>
    <alternativeName>
        <fullName>Solute carrier family 4 member 3</fullName>
    </alternativeName>
</protein>
<comment type="function">
    <text evidence="8 10">Sodium-independent anion exchanger which mediates the electroneutral exchange of chloride for bicarbonate ions across the cell membrane (PubMed:29167417, PubMed:7923606). May be involved in the regulation of intracellular pH, and the modulation of cardiac action potential (PubMed:29167417).</text>
</comment>
<comment type="catalytic activity">
    <reaction evidence="8">
        <text>hydrogencarbonate(in) + chloride(out) = hydrogencarbonate(out) + chloride(in)</text>
        <dbReference type="Rhea" id="RHEA:72363"/>
        <dbReference type="ChEBI" id="CHEBI:17544"/>
        <dbReference type="ChEBI" id="CHEBI:17996"/>
    </reaction>
</comment>
<comment type="catalytic activity">
    <molecule>Isoform BAE3</molecule>
    <reaction evidence="10">
        <text>hydrogencarbonate(in) + chloride(out) = hydrogencarbonate(out) + chloride(in)</text>
        <dbReference type="Rhea" id="RHEA:72363"/>
        <dbReference type="ChEBI" id="CHEBI:17544"/>
        <dbReference type="ChEBI" id="CHEBI:17996"/>
    </reaction>
</comment>
<comment type="catalytic activity">
    <molecule>Isoform CAE3</molecule>
    <reaction evidence="10">
        <text>hydrogencarbonate(in) + chloride(out) = hydrogencarbonate(out) + chloride(in)</text>
        <dbReference type="Rhea" id="RHEA:72363"/>
        <dbReference type="ChEBI" id="CHEBI:17544"/>
        <dbReference type="ChEBI" id="CHEBI:17996"/>
    </reaction>
</comment>
<comment type="interaction">
    <interactant intactId="EBI-20805570">
        <id>P48751</id>
    </interactant>
    <interactant intactId="EBI-355744">
        <id>Q12933</id>
        <label>TRAF2</label>
    </interactant>
    <organismsDiffer>false</organismsDiffer>
    <experiments>3</experiments>
</comment>
<comment type="subcellular location">
    <subcellularLocation>
        <location evidence="8">Cell membrane</location>
        <topology evidence="4">Multi-pass membrane protein</topology>
    </subcellularLocation>
</comment>
<comment type="subcellular location">
    <molecule>Isoform CAE3</molecule>
    <subcellularLocation>
        <location evidence="16">Cell membrane</location>
        <topology evidence="4">Multi-pass membrane protein</topology>
    </subcellularLocation>
</comment>
<comment type="alternative products">
    <event type="alternative splicing"/>
    <isoform>
        <id>P48751-1</id>
        <name>BAE3</name>
        <sequence type="displayed"/>
    </isoform>
    <isoform>
        <id>P48751-2</id>
        <name>CAE3</name>
        <sequence type="described" ref="VSP_000462 VSP_000463"/>
    </isoform>
    <isoform>
        <id>P48751-3</id>
        <name>3</name>
        <sequence type="described" ref="VSP_038184"/>
    </isoform>
    <text>Additional isoforms seem to exist.</text>
</comment>
<comment type="tissue specificity">
    <molecule>Isoform BAE3</molecule>
    <text evidence="10">Expressed in the heart.</text>
</comment>
<comment type="tissue specificity">
    <molecule>Isoform CAE3</molecule>
    <text evidence="10">Expressed in the heart.</text>
</comment>
<comment type="disease" evidence="8 9">
    <disease id="DI-06598">
        <name>Short QT syndrome 7</name>
        <acronym>SQT7</acronym>
        <description>An autosomal dominant form of short QT syndrome, a heart disorder characterized by idiopathic persistently and uniformly short QT interval on ECG in the absence of structural heart disease in affected individuals. It can cause syncope and sudden death.</description>
        <dbReference type="MIM" id="620231"/>
    </disease>
    <text>The disease is caused by variants affecting the gene represented in this entry.</text>
</comment>
<comment type="similarity">
    <text evidence="15">Belongs to the anion exchanger (TC 2.A.31) family.</text>
</comment>
<sequence length="1232" mass="135791">MANGVIPPPGGASPLPQVRVPLEEPPLSPDVEEEDDDLGKTLAVSRFGDLISKPPAWDPEKPSRSYSERDFEFHRHTSHHTHHPLSARLPPPHKLRRLPPTSARHTRRKRKKEKTSAPPSEGTPPIQEEGGAGVDEEEEEEEEEEGESEAEPVEPPHSGTPQKAKFSIGSDEDDSPGLPGRAAVTKPLPSVGPHTDKSPQHSSSSPSPRARASRLAGEKSRPWSPSASYDLRERLCPGSALGNPGGPEQQVPTDEAEAQMLGSADLDDMKSHRLEDNPGVRRHLVKKPSRTQGGRGSPSGLAPILRRKKKKKKLDRRPHEVFVELNELMLDRSQEPHWRETARWIKFEEDVEEETERWGKPHVASLSFRSLLELRRTIAHGAALLDLEQTTLPGIAHLVVETMIVSDQIRPEDRASVLRTLLLKHSHPNDDKDSGFFPRNPSSSSMNSVLGNHHPTPSHGPDGAVPTMADDLGEPAPLWPHDPDAKEKPLHMPGGDGHRGKSLKLLEKIPEDAEATVVLVGCVPFLEQPAAAFVRLNEAVLLESVLEVPVPVRFLFVMLGPSHTSTDYHELGRSIATLMSDKLFHEAAYQADDRQDLLSAISEFLDGSIVIPPSEVEGRDLLRSVAAFQRELLRKRREREQTKVEMTTRGGYTAPGKELSLELGGSEATPEDDPLLRTGSVFGGLVRDVRRRYPHYPSDLRDALHSQCVAAVLFIYFAALSPAITFGGLLGEKTEGLMGVSELIVSTAVLGVLFSLLGAQPLLVVGFSGPLLVFEEAFFKFCRAQDLEYLTGRVWVGLWLVVFVLALVAAEGSFLVRYISPFTQEIFAFLISLIFIYETFYKLYKVFTEHPLLPFYPPEGALEGSLDAGLEPNGSALPPTEGPPSPRNQPNTALLSLILMLGTFFIAFFLRKFRNSRFLGGKARRIIGDFGIPISILVMVLVDYSITDTYTQKLTVPTGLSVTSPDKRSWFIPPLGSARPFPPWMMVAAAVPALLVLILIFMETQITALIVSQKARRLLKGSGFHLDLLLIGSLGGLCGLFGLPWLTAATVRSVTHVNALTVMRTAIAPGDKPQIQEVREQRVTGVLIASLVGLSIVMGAVLRRIPLAVLFGIFLYMGVTSLSGIQLSQRLLLILMPAKHHPEQPYVTKVKTWRMHLFTCIQLGCIALLWVVKSTAASLAFPFLLLLTVPLRHCLLPRLFQDRELQALDSEDAEPNFDEDGQDEYNELHMPV</sequence>
<reference key="1">
    <citation type="journal article" date="1994" name="Circ. Res.">
        <title>Molecular cloning, expression, and chromosomal localization of two isoforms of the AE3 anion exchanger from human heart.</title>
        <authorList>
            <person name="Yannoukakos D."/>
            <person name="Stuart-Tilley A."/>
            <person name="Fernandez H."/>
            <person name="Fey P."/>
            <person name="Duyk G."/>
            <person name="Alper S.L."/>
        </authorList>
    </citation>
    <scope>NUCLEOTIDE SEQUENCE [MRNA] (ISOFORM BAE3)</scope>
    <scope>VARIANTS PRO-157 AND ALA-867</scope>
    <scope>FUNCTION</scope>
    <scope>TRANSPORTER ACTIVITY (ISOFORMS BAE3 AND CAE3)</scope>
    <scope>SUBCELLULAR LOCATION (ISOFORM CAE3)</scope>
    <scope>TISSUE SPECIFICITY (ISOFORMS BAE3 AND CAE3)</scope>
    <source>
        <tissue>Heart</tissue>
    </source>
</reference>
<reference key="2">
    <citation type="submission" date="1995-11" db="EMBL/GenBank/DDBJ databases">
        <title>Cloning of the characterization of the human cardiac anion exchanger gene.</title>
        <authorList>
            <person name="Kudo S."/>
            <person name="Mattei M.-G."/>
            <person name="Bloor C.M."/>
            <person name="Fukuda M."/>
            <person name="Ranney H.M."/>
            <person name="Xu A."/>
        </authorList>
    </citation>
    <scope>NUCLEOTIDE SEQUENCE [MRNA] (ISOFORM CAE3)</scope>
    <source>
        <tissue>Heart</tissue>
    </source>
</reference>
<reference key="3">
    <citation type="submission" date="2002-08" db="EMBL/GenBank/DDBJ databases">
        <title>Sequence of an alternative splice form of brain AE3.</title>
        <authorList>
            <person name="Mount D.B."/>
        </authorList>
    </citation>
    <scope>NUCLEOTIDE SEQUENCE [MRNA] (ISOFORM 3)</scope>
    <scope>VARIANT PRO-157</scope>
</reference>
<reference key="4">
    <citation type="journal article" date="2004" name="Nat. Genet.">
        <title>Complete sequencing and characterization of 21,243 full-length human cDNAs.</title>
        <authorList>
            <person name="Ota T."/>
            <person name="Suzuki Y."/>
            <person name="Nishikawa T."/>
            <person name="Otsuki T."/>
            <person name="Sugiyama T."/>
            <person name="Irie R."/>
            <person name="Wakamatsu A."/>
            <person name="Hayashi K."/>
            <person name="Sato H."/>
            <person name="Nagai K."/>
            <person name="Kimura K."/>
            <person name="Makita H."/>
            <person name="Sekine M."/>
            <person name="Obayashi M."/>
            <person name="Nishi T."/>
            <person name="Shibahara T."/>
            <person name="Tanaka T."/>
            <person name="Ishii S."/>
            <person name="Yamamoto J."/>
            <person name="Saito K."/>
            <person name="Kawai Y."/>
            <person name="Isono Y."/>
            <person name="Nakamura Y."/>
            <person name="Nagahari K."/>
            <person name="Murakami K."/>
            <person name="Yasuda T."/>
            <person name="Iwayanagi T."/>
            <person name="Wagatsuma M."/>
            <person name="Shiratori A."/>
            <person name="Sudo H."/>
            <person name="Hosoiri T."/>
            <person name="Kaku Y."/>
            <person name="Kodaira H."/>
            <person name="Kondo H."/>
            <person name="Sugawara M."/>
            <person name="Takahashi M."/>
            <person name="Kanda K."/>
            <person name="Yokoi T."/>
            <person name="Furuya T."/>
            <person name="Kikkawa E."/>
            <person name="Omura Y."/>
            <person name="Abe K."/>
            <person name="Kamihara K."/>
            <person name="Katsuta N."/>
            <person name="Sato K."/>
            <person name="Tanikawa M."/>
            <person name="Yamazaki M."/>
            <person name="Ninomiya K."/>
            <person name="Ishibashi T."/>
            <person name="Yamashita H."/>
            <person name="Murakawa K."/>
            <person name="Fujimori K."/>
            <person name="Tanai H."/>
            <person name="Kimata M."/>
            <person name="Watanabe M."/>
            <person name="Hiraoka S."/>
            <person name="Chiba Y."/>
            <person name="Ishida S."/>
            <person name="Ono Y."/>
            <person name="Takiguchi S."/>
            <person name="Watanabe S."/>
            <person name="Yosida M."/>
            <person name="Hotuta T."/>
            <person name="Kusano J."/>
            <person name="Kanehori K."/>
            <person name="Takahashi-Fujii A."/>
            <person name="Hara H."/>
            <person name="Tanase T.-O."/>
            <person name="Nomura Y."/>
            <person name="Togiya S."/>
            <person name="Komai F."/>
            <person name="Hara R."/>
            <person name="Takeuchi K."/>
            <person name="Arita M."/>
            <person name="Imose N."/>
            <person name="Musashino K."/>
            <person name="Yuuki H."/>
            <person name="Oshima A."/>
            <person name="Sasaki N."/>
            <person name="Aotsuka S."/>
            <person name="Yoshikawa Y."/>
            <person name="Matsunawa H."/>
            <person name="Ichihara T."/>
            <person name="Shiohata N."/>
            <person name="Sano S."/>
            <person name="Moriya S."/>
            <person name="Momiyama H."/>
            <person name="Satoh N."/>
            <person name="Takami S."/>
            <person name="Terashima Y."/>
            <person name="Suzuki O."/>
            <person name="Nakagawa S."/>
            <person name="Senoh A."/>
            <person name="Mizoguchi H."/>
            <person name="Goto Y."/>
            <person name="Shimizu F."/>
            <person name="Wakebe H."/>
            <person name="Hishigaki H."/>
            <person name="Watanabe T."/>
            <person name="Sugiyama A."/>
            <person name="Takemoto M."/>
            <person name="Kawakami B."/>
            <person name="Yamazaki M."/>
            <person name="Watanabe K."/>
            <person name="Kumagai A."/>
            <person name="Itakura S."/>
            <person name="Fukuzumi Y."/>
            <person name="Fujimori Y."/>
            <person name="Komiyama M."/>
            <person name="Tashiro H."/>
            <person name="Tanigami A."/>
            <person name="Fujiwara T."/>
            <person name="Ono T."/>
            <person name="Yamada K."/>
            <person name="Fujii Y."/>
            <person name="Ozaki K."/>
            <person name="Hirao M."/>
            <person name="Ohmori Y."/>
            <person name="Kawabata A."/>
            <person name="Hikiji T."/>
            <person name="Kobatake N."/>
            <person name="Inagaki H."/>
            <person name="Ikema Y."/>
            <person name="Okamoto S."/>
            <person name="Okitani R."/>
            <person name="Kawakami T."/>
            <person name="Noguchi S."/>
            <person name="Itoh T."/>
            <person name="Shigeta K."/>
            <person name="Senba T."/>
            <person name="Matsumura K."/>
            <person name="Nakajima Y."/>
            <person name="Mizuno T."/>
            <person name="Morinaga M."/>
            <person name="Sasaki M."/>
            <person name="Togashi T."/>
            <person name="Oyama M."/>
            <person name="Hata H."/>
            <person name="Watanabe M."/>
            <person name="Komatsu T."/>
            <person name="Mizushima-Sugano J."/>
            <person name="Satoh T."/>
            <person name="Shirai Y."/>
            <person name="Takahashi Y."/>
            <person name="Nakagawa K."/>
            <person name="Okumura K."/>
            <person name="Nagase T."/>
            <person name="Nomura N."/>
            <person name="Kikuchi H."/>
            <person name="Masuho Y."/>
            <person name="Yamashita R."/>
            <person name="Nakai K."/>
            <person name="Yada T."/>
            <person name="Nakamura Y."/>
            <person name="Ohara O."/>
            <person name="Isogai T."/>
            <person name="Sugano S."/>
        </authorList>
    </citation>
    <scope>NUCLEOTIDE SEQUENCE [LARGE SCALE MRNA] (ISOFORM BAE3)</scope>
    <scope>VARIANTS PRO-157 AND ALA-867</scope>
    <source>
        <tissue>Hippocampus</tissue>
    </source>
</reference>
<reference key="5">
    <citation type="journal article" date="2005" name="Nature">
        <title>Generation and annotation of the DNA sequences of human chromosomes 2 and 4.</title>
        <authorList>
            <person name="Hillier L.W."/>
            <person name="Graves T.A."/>
            <person name="Fulton R.S."/>
            <person name="Fulton L.A."/>
            <person name="Pepin K.H."/>
            <person name="Minx P."/>
            <person name="Wagner-McPherson C."/>
            <person name="Layman D."/>
            <person name="Wylie K."/>
            <person name="Sekhon M."/>
            <person name="Becker M.C."/>
            <person name="Fewell G.A."/>
            <person name="Delehaunty K.D."/>
            <person name="Miner T.L."/>
            <person name="Nash W.E."/>
            <person name="Kremitzki C."/>
            <person name="Oddy L."/>
            <person name="Du H."/>
            <person name="Sun H."/>
            <person name="Bradshaw-Cordum H."/>
            <person name="Ali J."/>
            <person name="Carter J."/>
            <person name="Cordes M."/>
            <person name="Harris A."/>
            <person name="Isak A."/>
            <person name="van Brunt A."/>
            <person name="Nguyen C."/>
            <person name="Du F."/>
            <person name="Courtney L."/>
            <person name="Kalicki J."/>
            <person name="Ozersky P."/>
            <person name="Abbott S."/>
            <person name="Armstrong J."/>
            <person name="Belter E.A."/>
            <person name="Caruso L."/>
            <person name="Cedroni M."/>
            <person name="Cotton M."/>
            <person name="Davidson T."/>
            <person name="Desai A."/>
            <person name="Elliott G."/>
            <person name="Erb T."/>
            <person name="Fronick C."/>
            <person name="Gaige T."/>
            <person name="Haakenson W."/>
            <person name="Haglund K."/>
            <person name="Holmes A."/>
            <person name="Harkins R."/>
            <person name="Kim K."/>
            <person name="Kruchowski S.S."/>
            <person name="Strong C.M."/>
            <person name="Grewal N."/>
            <person name="Goyea E."/>
            <person name="Hou S."/>
            <person name="Levy A."/>
            <person name="Martinka S."/>
            <person name="Mead K."/>
            <person name="McLellan M.D."/>
            <person name="Meyer R."/>
            <person name="Randall-Maher J."/>
            <person name="Tomlinson C."/>
            <person name="Dauphin-Kohlberg S."/>
            <person name="Kozlowicz-Reilly A."/>
            <person name="Shah N."/>
            <person name="Swearengen-Shahid S."/>
            <person name="Snider J."/>
            <person name="Strong J.T."/>
            <person name="Thompson J."/>
            <person name="Yoakum M."/>
            <person name="Leonard S."/>
            <person name="Pearman C."/>
            <person name="Trani L."/>
            <person name="Radionenko M."/>
            <person name="Waligorski J.E."/>
            <person name="Wang C."/>
            <person name="Rock S.M."/>
            <person name="Tin-Wollam A.-M."/>
            <person name="Maupin R."/>
            <person name="Latreille P."/>
            <person name="Wendl M.C."/>
            <person name="Yang S.-P."/>
            <person name="Pohl C."/>
            <person name="Wallis J.W."/>
            <person name="Spieth J."/>
            <person name="Bieri T.A."/>
            <person name="Berkowicz N."/>
            <person name="Nelson J.O."/>
            <person name="Osborne J."/>
            <person name="Ding L."/>
            <person name="Meyer R."/>
            <person name="Sabo A."/>
            <person name="Shotland Y."/>
            <person name="Sinha P."/>
            <person name="Wohldmann P.E."/>
            <person name="Cook L.L."/>
            <person name="Hickenbotham M.T."/>
            <person name="Eldred J."/>
            <person name="Williams D."/>
            <person name="Jones T.A."/>
            <person name="She X."/>
            <person name="Ciccarelli F.D."/>
            <person name="Izaurralde E."/>
            <person name="Taylor J."/>
            <person name="Schmutz J."/>
            <person name="Myers R.M."/>
            <person name="Cox D.R."/>
            <person name="Huang X."/>
            <person name="McPherson J.D."/>
            <person name="Mardis E.R."/>
            <person name="Clifton S.W."/>
            <person name="Warren W.C."/>
            <person name="Chinwalla A.T."/>
            <person name="Eddy S.R."/>
            <person name="Marra M.A."/>
            <person name="Ovcharenko I."/>
            <person name="Furey T.S."/>
            <person name="Miller W."/>
            <person name="Eichler E.E."/>
            <person name="Bork P."/>
            <person name="Suyama M."/>
            <person name="Torrents D."/>
            <person name="Waterston R.H."/>
            <person name="Wilson R.K."/>
        </authorList>
    </citation>
    <scope>NUCLEOTIDE SEQUENCE [LARGE SCALE GENOMIC DNA]</scope>
</reference>
<reference key="6">
    <citation type="submission" date="2005-07" db="EMBL/GenBank/DDBJ databases">
        <authorList>
            <person name="Mural R.J."/>
            <person name="Istrail S."/>
            <person name="Sutton G.G."/>
            <person name="Florea L."/>
            <person name="Halpern A.L."/>
            <person name="Mobarry C.M."/>
            <person name="Lippert R."/>
            <person name="Walenz B."/>
            <person name="Shatkay H."/>
            <person name="Dew I."/>
            <person name="Miller J.R."/>
            <person name="Flanigan M.J."/>
            <person name="Edwards N.J."/>
            <person name="Bolanos R."/>
            <person name="Fasulo D."/>
            <person name="Halldorsson B.V."/>
            <person name="Hannenhalli S."/>
            <person name="Turner R."/>
            <person name="Yooseph S."/>
            <person name="Lu F."/>
            <person name="Nusskern D.R."/>
            <person name="Shue B.C."/>
            <person name="Zheng X.H."/>
            <person name="Zhong F."/>
            <person name="Delcher A.L."/>
            <person name="Huson D.H."/>
            <person name="Kravitz S.A."/>
            <person name="Mouchard L."/>
            <person name="Reinert K."/>
            <person name="Remington K.A."/>
            <person name="Clark A.G."/>
            <person name="Waterman M.S."/>
            <person name="Eichler E.E."/>
            <person name="Adams M.D."/>
            <person name="Hunkapiller M.W."/>
            <person name="Myers E.W."/>
            <person name="Venter J.C."/>
        </authorList>
    </citation>
    <scope>NUCLEOTIDE SEQUENCE [LARGE SCALE GENOMIC DNA]</scope>
    <scope>VARIANTS PRO-157 AND ALA-867</scope>
</reference>
<reference key="7">
    <citation type="journal article" date="2004" name="Genome Res.">
        <title>The status, quality, and expansion of the NIH full-length cDNA project: the Mammalian Gene Collection (MGC).</title>
        <authorList>
            <consortium name="The MGC Project Team"/>
        </authorList>
    </citation>
    <scope>NUCLEOTIDE SEQUENCE [LARGE SCALE MRNA] (ISOFORM BAE3)</scope>
    <scope>VARIANTS PRO-157 AND ALA-867</scope>
    <source>
        <tissue>Testis</tissue>
    </source>
</reference>
<reference key="8">
    <citation type="journal article" date="2017" name="Nat. Commun.">
        <title>Loss-of-activity-mutation in the cardiac chloride-bicarbonate exchanger AE3 causes short QT syndrome.</title>
        <authorList>
            <person name="Thorsen K."/>
            <person name="Dam V.S."/>
            <person name="Kjaer-Sorensen K."/>
            <person name="Pedersen L.N."/>
            <person name="Skeberdis V.A."/>
            <person name="Jurevicius J."/>
            <person name="Treinys R."/>
            <person name="Petersen I.M.B.S."/>
            <person name="Nielsen M.S."/>
            <person name="Oxvig C."/>
            <person name="Morth J.P."/>
            <person name="Matchkov V.V."/>
            <person name="Aalkjaer C."/>
            <person name="Bundgaard H."/>
            <person name="Jensen H.K."/>
        </authorList>
    </citation>
    <scope>VARIANT SQT7 HIS-343</scope>
    <scope>CHARACTERIZATION OF VARIANT SQT7 HIS-343</scope>
    <scope>INVOLVEMENT IN SQT7</scope>
    <scope>FUNCTION</scope>
    <scope>TRANSPORTER ACTIVITY</scope>
    <scope>SUBCELLULAR LOCATION</scope>
</reference>
<reference key="9">
    <citation type="journal article" date="2023" name="Heart Rhythm">
        <title>Genetic analysis identifies the SLC4A3 anion exchanger as a major gene for short QT syndrome.</title>
        <authorList>
            <person name="Christiansen M.K."/>
            <person name="Kjaer-Soerensen K."/>
            <person name="Clavsen N.C."/>
            <person name="Dittmann S."/>
            <person name="Jensen M.F."/>
            <person name="Guldbrandsen H.O."/>
            <person name="Pedersen L.N."/>
            <person name="Soerensen R.H."/>
            <person name="Lildballe D.L."/>
            <person name="Mueller K."/>
            <person name="Mueller P."/>
            <person name="Vogel K."/>
            <person name="Rudic B."/>
            <person name="Borggrefe M."/>
            <person name="Oxvig C."/>
            <person name="Aalkjaer C."/>
            <person name="Schulze-Bahr E."/>
            <person name="Matchkov V."/>
            <person name="Bundgaard H."/>
            <person name="Jensen H.K."/>
        </authorList>
    </citation>
    <scope>VARIANTS SQT7 CYS-573; TRP-594; ASP-825 AND HIS-925</scope>
    <scope>CHARACTERIZATION OF VARIANTS SQT7 CYS-573; TRP-594; ASP-825 AND HIS-925</scope>
</reference>
<accession>P48751</accession>
<accession>A6H8L2</accession>
<accession>A8K1Q9</accession>
<accession>B7ZVX6</accession>
<accession>B9EGD1</accession>
<accession>Q6YIQ9</accession>
<name>B3A3_HUMAN</name>
<feature type="chain" id="PRO_0000079219" description="Anion exchange protein 3">
    <location>
        <begin position="1"/>
        <end position="1232"/>
    </location>
</feature>
<feature type="topological domain" description="Cytoplasmic">
    <location>
        <begin position="1"/>
        <end position="708"/>
    </location>
</feature>
<feature type="transmembrane region" description="Helical" evidence="4">
    <location>
        <begin position="709"/>
        <end position="731"/>
    </location>
</feature>
<feature type="transmembrane region" description="Helical" evidence="4">
    <location>
        <begin position="737"/>
        <end position="774"/>
    </location>
</feature>
<feature type="transmembrane region" description="Helical" evidence="4">
    <location>
        <begin position="794"/>
        <end position="816"/>
    </location>
</feature>
<feature type="transmembrane region" description="Helical" evidence="4">
    <location>
        <begin position="826"/>
        <end position="847"/>
    </location>
</feature>
<feature type="transmembrane region" description="Helical" evidence="4">
    <location>
        <begin position="893"/>
        <end position="910"/>
    </location>
</feature>
<feature type="topological domain" description="Cytoplasmic" evidence="4">
    <location>
        <begin position="911"/>
        <end position="925"/>
    </location>
</feature>
<feature type="transmembrane region" description="Helical" evidence="4">
    <location>
        <begin position="926"/>
        <end position="946"/>
    </location>
</feature>
<feature type="transmembrane region" description="Helical" evidence="4">
    <location>
        <begin position="980"/>
        <end position="1002"/>
    </location>
</feature>
<feature type="transmembrane region" description="Helical" evidence="4">
    <location>
        <begin position="1028"/>
        <end position="1049"/>
    </location>
</feature>
<feature type="transmembrane region" description="Helical" evidence="4">
    <location>
        <begin position="1083"/>
        <end position="1128"/>
    </location>
</feature>
<feature type="transmembrane region" description="Helical" evidence="4">
    <location>
        <begin position="1155"/>
        <end position="1191"/>
    </location>
</feature>
<feature type="region of interest" description="Disordered" evidence="5">
    <location>
        <begin position="1"/>
        <end position="316"/>
    </location>
</feature>
<feature type="region of interest" description="Disordered" evidence="5">
    <location>
        <begin position="429"/>
        <end position="498"/>
    </location>
</feature>
<feature type="region of interest" description="Membrane (anion exchange)">
    <location>
        <begin position="709"/>
        <end position="1232"/>
    </location>
</feature>
<feature type="compositionally biased region" description="Pro residues" evidence="5">
    <location>
        <begin position="1"/>
        <end position="11"/>
    </location>
</feature>
<feature type="compositionally biased region" description="Basic and acidic residues" evidence="5">
    <location>
        <begin position="58"/>
        <end position="75"/>
    </location>
</feature>
<feature type="compositionally biased region" description="Basic residues" evidence="5">
    <location>
        <begin position="76"/>
        <end position="97"/>
    </location>
</feature>
<feature type="compositionally biased region" description="Basic residues" evidence="5">
    <location>
        <begin position="104"/>
        <end position="113"/>
    </location>
</feature>
<feature type="compositionally biased region" description="Acidic residues" evidence="5">
    <location>
        <begin position="134"/>
        <end position="152"/>
    </location>
</feature>
<feature type="compositionally biased region" description="Low complexity" evidence="5">
    <location>
        <begin position="200"/>
        <end position="215"/>
    </location>
</feature>
<feature type="compositionally biased region" description="Basic and acidic residues" evidence="5">
    <location>
        <begin position="267"/>
        <end position="279"/>
    </location>
</feature>
<feature type="compositionally biased region" description="Basic residues" evidence="5">
    <location>
        <begin position="280"/>
        <end position="289"/>
    </location>
</feature>
<feature type="compositionally biased region" description="Basic residues" evidence="5">
    <location>
        <begin position="305"/>
        <end position="316"/>
    </location>
</feature>
<feature type="compositionally biased region" description="Polar residues" evidence="5">
    <location>
        <begin position="440"/>
        <end position="450"/>
    </location>
</feature>
<feature type="compositionally biased region" description="Basic and acidic residues" evidence="5">
    <location>
        <begin position="481"/>
        <end position="498"/>
    </location>
</feature>
<feature type="modified residue" description="Phosphoserine" evidence="2">
    <location>
        <position position="167"/>
    </location>
</feature>
<feature type="modified residue" description="Phosphoserine" evidence="2">
    <location>
        <position position="170"/>
    </location>
</feature>
<feature type="modified residue" description="Phosphoserine" evidence="3">
    <location>
        <position position="175"/>
    </location>
</feature>
<feature type="modified residue" description="Phosphoserine" evidence="2">
    <location>
        <position position="198"/>
    </location>
</feature>
<feature type="modified residue" description="Omega-N-methylarginine" evidence="2">
    <location>
        <position position="295"/>
    </location>
</feature>
<feature type="lipid moiety-binding region" description="S-palmitoyl cysteine" evidence="1">
    <location>
        <position position="1165"/>
    </location>
</feature>
<feature type="splice variant" id="VSP_000462" description="In isoform CAE3." evidence="13">
    <location>
        <begin position="1"/>
        <end position="296"/>
    </location>
</feature>
<feature type="splice variant" id="VSP_038184" description="In isoform 3." evidence="14">
    <original>S</original>
    <variation>SRPCSELRDGDGTTDLALSSPRLLCCLP</variation>
    <location>
        <position position="203"/>
    </location>
</feature>
<feature type="splice variant" id="VSP_000463" description="In isoform CAE3." evidence="13">
    <original>SPS</original>
    <variation>MPA</variation>
    <location>
        <begin position="297"/>
        <end position="299"/>
    </location>
</feature>
<feature type="sequence variant" id="VAR_059081" description="In dbSNP:rs597306." evidence="6 7 10 11 12">
    <original>H</original>
    <variation>P</variation>
    <location>
        <position position="157"/>
    </location>
</feature>
<feature type="sequence variant" id="VAR_055536" description="In dbSNP:rs36068948.">
    <original>S</original>
    <variation>L</variation>
    <location>
        <position position="226"/>
    </location>
</feature>
<feature type="sequence variant" id="VAR_088079" description="In SQT7; loss-of-function variant unable to rescue systolic contraction abnormalities in zebrafish morphants; decreased chloride-bicarbonate exchange in transfected cells; decreased localization to cell membrane." evidence="8">
    <original>R</original>
    <variation>H</variation>
    <location>
        <position position="343"/>
    </location>
</feature>
<feature type="sequence variant" id="VAR_088080" description="In SQT7; uncertain significance; unable to rescue heart rate abnormalities in zebrafish morphants." evidence="9">
    <original>R</original>
    <variation>C</variation>
    <location>
        <position position="573"/>
    </location>
</feature>
<feature type="sequence variant" id="VAR_088081" description="In SQT7; uncertain significance; unable to rescue heart rate abnormalities in zebrafish morphants." evidence="9">
    <original>R</original>
    <variation>W</variation>
    <location>
        <position position="594"/>
    </location>
</feature>
<feature type="sequence variant" id="VAR_088082" description="In SQT7; uncertain significance; unable to rescue heart rate abnormalities in zebrafish morphants." evidence="9">
    <original>E</original>
    <variation>D</variation>
    <location>
        <position position="825"/>
    </location>
</feature>
<feature type="sequence variant" id="VAR_059082" description="In dbSNP:rs635311." evidence="6 7 10 12">
    <original>D</original>
    <variation>A</variation>
    <location>
        <position position="867"/>
    </location>
</feature>
<feature type="sequence variant" id="VAR_088083" description="In SQT7; uncertain significance; unable to rescue heart rate abnormalities in zebrafish morphants." evidence="9">
    <original>R</original>
    <variation>H</variation>
    <location>
        <position position="925"/>
    </location>
</feature>
<feature type="sequence conflict" description="In Ref. 7; AAI46657." evidence="15" ref="7">
    <original>P</original>
    <variation>S</variation>
    <location>
        <position position="118"/>
    </location>
</feature>
<feature type="sequence conflict" description="In Ref. 7; AAI71760." evidence="15" ref="7">
    <original>N</original>
    <variation>S</variation>
    <location>
        <position position="243"/>
    </location>
</feature>
<feature type="sequence conflict" description="In Ref. 7; AAI46657." evidence="15" ref="7">
    <original>Q</original>
    <variation>H</variation>
    <location>
        <position position="250"/>
    </location>
</feature>
<feature type="sequence conflict" description="In Ref. 2; AAB05850." evidence="15" ref="2">
    <original>I</original>
    <variation>V</variation>
    <location>
        <position position="304"/>
    </location>
</feature>
<feature type="sequence conflict" description="In Ref. 2; AAB05850." evidence="15" ref="2">
    <original>R</original>
    <variation>P</variation>
    <location>
        <position position="343"/>
    </location>
</feature>
<feature type="sequence conflict" description="In Ref. 2; AAB05850." evidence="15" ref="2">
    <original>P</original>
    <variation>S</variation>
    <location>
        <position position="466"/>
    </location>
</feature>
<feature type="sequence conflict" description="In Ref. 3; AAN34939." evidence="15" ref="3">
    <original>Q</original>
    <variation>K</variation>
    <location>
        <position position="590"/>
    </location>
</feature>
<feature type="sequence conflict" description="In Ref. 2; AAB05850." evidence="15" ref="2">
    <original>S</original>
    <variation>G</variation>
    <location>
        <position position="608"/>
    </location>
</feature>
<feature type="sequence conflict" description="In Ref. 2; AAB05850." evidence="15" ref="2">
    <original>D</original>
    <variation>A</variation>
    <location>
        <position position="702"/>
    </location>
</feature>
<feature type="sequence conflict" description="In Ref. 2; AAB05850." evidence="15" ref="2">
    <original>GS</original>
    <variation>FI</variation>
    <location>
        <begin position="812"/>
        <end position="813"/>
    </location>
</feature>
<feature type="sequence conflict" description="In Ref. 2; AAB05850." evidence="15" ref="2">
    <original>F</original>
    <variation>L</variation>
    <location>
        <position position="822"/>
    </location>
</feature>
<feature type="sequence conflict" description="In Ref. 3; AAN34939." evidence="15" ref="3">
    <original>H</original>
    <variation>R</variation>
    <location>
        <position position="850"/>
    </location>
</feature>
<feature type="sequence conflict" description="In Ref. 2; AAB05850." evidence="15" ref="2">
    <location>
        <begin position="860"/>
        <end position="863"/>
    </location>
</feature>
<feature type="sequence conflict" description="In Ref. 2; AAB05850." evidence="15" ref="2">
    <original>S</original>
    <variation>C</variation>
    <location>
        <position position="875"/>
    </location>
</feature>
<feature type="sequence conflict" description="In Ref. 2; AAB05850." evidence="15" ref="2">
    <original>SPR</original>
    <variation>GPE</variation>
    <location>
        <begin position="885"/>
        <end position="887"/>
    </location>
</feature>
<feature type="sequence conflict" description="In Ref. 2; AAB05850." evidence="15" ref="2">
    <original>L</original>
    <variation>P</variation>
    <location>
        <position position="899"/>
    </location>
</feature>
<feature type="sequence conflict" description="In Ref. 4; BAF82663." evidence="15" ref="4">
    <original>K</original>
    <variation>N</variation>
    <location>
        <position position="953"/>
    </location>
</feature>
<feature type="sequence conflict" description="In Ref. 7; AAI71760." evidence="15" ref="7">
    <original>P</original>
    <variation>L</variation>
    <location>
        <position position="983"/>
    </location>
</feature>
<feature type="sequence conflict" description="In Ref. 4; BAF82663." evidence="15" ref="4">
    <original>R</original>
    <variation>H</variation>
    <location>
        <position position="1052"/>
    </location>
</feature>
<feature type="sequence conflict" description="In Ref. 3; AAN34939." evidence="15" ref="3">
    <original>V</original>
    <variation>I</variation>
    <location>
        <position position="1054"/>
    </location>
</feature>
<feature type="sequence conflict" description="In Ref. 2; AAB05850." evidence="15" ref="2">
    <original>I</original>
    <variation>M</variation>
    <location>
        <position position="1096"/>
    </location>
</feature>
<feature type="strand" evidence="19">
    <location>
        <begin position="321"/>
        <end position="329"/>
    </location>
</feature>
<feature type="strand" evidence="19">
    <location>
        <begin position="337"/>
        <end position="351"/>
    </location>
</feature>
<feature type="turn" evidence="19">
    <location>
        <begin position="353"/>
        <end position="355"/>
    </location>
</feature>
<feature type="helix" evidence="19">
    <location>
        <begin position="368"/>
        <end position="379"/>
    </location>
</feature>
<feature type="strand" evidence="19">
    <location>
        <begin position="380"/>
        <end position="387"/>
    </location>
</feature>
<feature type="helix" evidence="19">
    <location>
        <begin position="392"/>
        <end position="405"/>
    </location>
</feature>
<feature type="helix" evidence="19">
    <location>
        <begin position="411"/>
        <end position="413"/>
    </location>
</feature>
<feature type="helix" evidence="19">
    <location>
        <begin position="414"/>
        <end position="420"/>
    </location>
</feature>
<feature type="helix" evidence="19">
    <location>
        <begin position="498"/>
        <end position="508"/>
    </location>
</feature>
<feature type="strand" evidence="19">
    <location>
        <begin position="514"/>
        <end position="522"/>
    </location>
</feature>
<feature type="strand" evidence="19">
    <location>
        <begin position="530"/>
        <end position="540"/>
    </location>
</feature>
<feature type="turn" evidence="19">
    <location>
        <begin position="543"/>
        <end position="545"/>
    </location>
</feature>
<feature type="strand" evidence="19">
    <location>
        <begin position="546"/>
        <end position="549"/>
    </location>
</feature>
<feature type="strand" evidence="19">
    <location>
        <begin position="552"/>
        <end position="560"/>
    </location>
</feature>
<feature type="helix" evidence="19">
    <location>
        <begin position="568"/>
        <end position="579"/>
    </location>
</feature>
<feature type="helix" evidence="19">
    <location>
        <begin position="582"/>
        <end position="590"/>
    </location>
</feature>
<feature type="helix" evidence="19">
    <location>
        <begin position="594"/>
        <end position="606"/>
    </location>
</feature>
<feature type="strand" evidence="19">
    <location>
        <begin position="609"/>
        <end position="611"/>
    </location>
</feature>
<feature type="helix" evidence="19">
    <location>
        <begin position="620"/>
        <end position="622"/>
    </location>
</feature>
<feature type="helix" evidence="19">
    <location>
        <begin position="625"/>
        <end position="647"/>
    </location>
</feature>
<feature type="helix" evidence="17">
    <location>
        <begin position="683"/>
        <end position="692"/>
    </location>
</feature>
<feature type="helix" evidence="17">
    <location>
        <begin position="693"/>
        <end position="695"/>
    </location>
</feature>
<feature type="helix" evidence="17">
    <location>
        <begin position="696"/>
        <end position="701"/>
    </location>
</feature>
<feature type="helix" evidence="17">
    <location>
        <begin position="707"/>
        <end position="733"/>
    </location>
</feature>
<feature type="turn" evidence="17">
    <location>
        <begin position="734"/>
        <end position="736"/>
    </location>
</feature>
<feature type="helix" evidence="17">
    <location>
        <begin position="740"/>
        <end position="757"/>
    </location>
</feature>
<feature type="strand" evidence="18">
    <location>
        <begin position="764"/>
        <end position="766"/>
    </location>
</feature>
<feature type="helix" evidence="17">
    <location>
        <begin position="769"/>
        <end position="784"/>
    </location>
</feature>
<feature type="helix" evidence="17">
    <location>
        <begin position="789"/>
        <end position="809"/>
    </location>
</feature>
<feature type="helix" evidence="17">
    <location>
        <begin position="812"/>
        <end position="818"/>
    </location>
</feature>
<feature type="helix" evidence="17">
    <location>
        <begin position="821"/>
        <end position="849"/>
    </location>
</feature>
<feature type="helix" evidence="17">
    <location>
        <begin position="893"/>
        <end position="912"/>
    </location>
</feature>
<feature type="helix" evidence="17">
    <location>
        <begin position="913"/>
        <end position="915"/>
    </location>
</feature>
<feature type="strand" evidence="18">
    <location>
        <begin position="916"/>
        <end position="919"/>
    </location>
</feature>
<feature type="helix" evidence="17">
    <location>
        <begin position="921"/>
        <end position="929"/>
    </location>
</feature>
<feature type="helix" evidence="17">
    <location>
        <begin position="931"/>
        <end position="945"/>
    </location>
</feature>
<feature type="turn" evidence="17">
    <location>
        <begin position="965"/>
        <end position="967"/>
    </location>
</feature>
<feature type="strand" evidence="17">
    <location>
        <begin position="977"/>
        <end position="979"/>
    </location>
</feature>
<feature type="helix" evidence="17">
    <location>
        <begin position="983"/>
        <end position="988"/>
    </location>
</feature>
<feature type="helix" evidence="17">
    <location>
        <begin position="990"/>
        <end position="1011"/>
    </location>
</feature>
<feature type="helix" evidence="17">
    <location>
        <begin position="1014"/>
        <end position="1016"/>
    </location>
</feature>
<feature type="helix" evidence="17">
    <location>
        <begin position="1026"/>
        <end position="1038"/>
    </location>
</feature>
<feature type="helix" evidence="17">
    <location>
        <begin position="1039"/>
        <end position="1041"/>
    </location>
</feature>
<feature type="strand" evidence="18">
    <location>
        <begin position="1047"/>
        <end position="1049"/>
    </location>
</feature>
<feature type="helix" evidence="17">
    <location>
        <begin position="1050"/>
        <end position="1059"/>
    </location>
</feature>
<feature type="strand" evidence="17">
    <location>
        <begin position="1061"/>
        <end position="1063"/>
    </location>
</feature>
<feature type="strand" evidence="17">
    <location>
        <begin position="1075"/>
        <end position="1078"/>
    </location>
</feature>
<feature type="helix" evidence="17">
    <location>
        <begin position="1083"/>
        <end position="1094"/>
    </location>
</feature>
<feature type="helix" evidence="17">
    <location>
        <begin position="1095"/>
        <end position="1097"/>
    </location>
</feature>
<feature type="helix" evidence="17">
    <location>
        <begin position="1099"/>
        <end position="1102"/>
    </location>
</feature>
<feature type="helix" evidence="17">
    <location>
        <begin position="1107"/>
        <end position="1121"/>
    </location>
</feature>
<feature type="helix" evidence="17">
    <location>
        <begin position="1122"/>
        <end position="1124"/>
    </location>
</feature>
<feature type="helix" evidence="17">
    <location>
        <begin position="1126"/>
        <end position="1135"/>
    </location>
</feature>
<feature type="helix" evidence="17">
    <location>
        <begin position="1138"/>
        <end position="1140"/>
    </location>
</feature>
<feature type="helix" evidence="17">
    <location>
        <begin position="1145"/>
        <end position="1148"/>
    </location>
</feature>
<feature type="helix" evidence="17">
    <location>
        <begin position="1152"/>
        <end position="1174"/>
    </location>
</feature>
<feature type="helix" evidence="17">
    <location>
        <begin position="1178"/>
        <end position="1180"/>
    </location>
</feature>
<feature type="helix" evidence="17">
    <location>
        <begin position="1181"/>
        <end position="1186"/>
    </location>
</feature>
<feature type="helix" evidence="17">
    <location>
        <begin position="1188"/>
        <end position="1194"/>
    </location>
</feature>
<feature type="helix" evidence="17">
    <location>
        <begin position="1196"/>
        <end position="1199"/>
    </location>
</feature>
<feature type="helix" evidence="17">
    <location>
        <begin position="1202"/>
        <end position="1208"/>
    </location>
</feature>
<gene>
    <name type="primary">SLC4A3</name>
    <name type="synonym">AE3</name>
</gene>